<sequence length="242" mass="25469">MTEITDRYFDDLIARLTGLRGRLAEPMAKAAELITAAALADNRVYVFGTGHSHMMAEELHYRAGGLAITVPILCGAIMLQDGAAASSHFERIKGAVLPILERYGIREGDVLIVVSNSGVNAAPIEAARYAREKGAAVIAVTSVTYSNAIAKGRTQLLSLADVVLDNDAPAGDAVLEMEGSSLKVGPVSTALGVTILNAIFADVAAKLVGKGDAPIYLSANMPGSGEVNRELVARYRDRNPHL</sequence>
<feature type="chain" id="PRO_1000066946" description="UPF0309 protein Oant_1457">
    <location>
        <begin position="1"/>
        <end position="242"/>
    </location>
</feature>
<feature type="domain" description="SIS" evidence="1">
    <location>
        <begin position="30"/>
        <end position="214"/>
    </location>
</feature>
<dbReference type="EMBL" id="CP000758">
    <property type="protein sequence ID" value="ABS14174.1"/>
    <property type="molecule type" value="Genomic_DNA"/>
</dbReference>
<dbReference type="RefSeq" id="WP_012091517.1">
    <property type="nucleotide sequence ID" value="NC_009667.1"/>
</dbReference>
<dbReference type="SMR" id="A6WYX0"/>
<dbReference type="STRING" id="439375.Oant_1457"/>
<dbReference type="KEGG" id="oan:Oant_1457"/>
<dbReference type="PATRIC" id="fig|439375.7.peg.1526"/>
<dbReference type="eggNOG" id="COG4821">
    <property type="taxonomic scope" value="Bacteria"/>
</dbReference>
<dbReference type="HOGENOM" id="CLU_089975_0_0_5"/>
<dbReference type="PhylomeDB" id="A6WYX0"/>
<dbReference type="Proteomes" id="UP000002301">
    <property type="component" value="Chromosome 1"/>
</dbReference>
<dbReference type="GO" id="GO:0097367">
    <property type="term" value="F:carbohydrate derivative binding"/>
    <property type="evidence" value="ECO:0007669"/>
    <property type="project" value="InterPro"/>
</dbReference>
<dbReference type="GO" id="GO:1901135">
    <property type="term" value="P:carbohydrate derivative metabolic process"/>
    <property type="evidence" value="ECO:0007669"/>
    <property type="project" value="InterPro"/>
</dbReference>
<dbReference type="CDD" id="cd05013">
    <property type="entry name" value="SIS_RpiR"/>
    <property type="match status" value="1"/>
</dbReference>
<dbReference type="Gene3D" id="3.40.50.10490">
    <property type="entry name" value="Glucose-6-phosphate isomerase like protein, domain 1"/>
    <property type="match status" value="1"/>
</dbReference>
<dbReference type="HAMAP" id="MF_01240">
    <property type="entry name" value="UPF0309"/>
    <property type="match status" value="1"/>
</dbReference>
<dbReference type="InterPro" id="IPR035472">
    <property type="entry name" value="RpiR-like_SIS"/>
</dbReference>
<dbReference type="InterPro" id="IPR001347">
    <property type="entry name" value="SIS_dom"/>
</dbReference>
<dbReference type="InterPro" id="IPR046348">
    <property type="entry name" value="SIS_dom_sf"/>
</dbReference>
<dbReference type="InterPro" id="IPR050099">
    <property type="entry name" value="SIS_GmhA/DiaA_subfam"/>
</dbReference>
<dbReference type="InterPro" id="IPR022951">
    <property type="entry name" value="UPF0309"/>
</dbReference>
<dbReference type="NCBIfam" id="NF002805">
    <property type="entry name" value="PRK02947.1"/>
    <property type="match status" value="1"/>
</dbReference>
<dbReference type="PANTHER" id="PTHR30390:SF7">
    <property type="entry name" value="PHOSPHOHEPTOSE ISOMERASE"/>
    <property type="match status" value="1"/>
</dbReference>
<dbReference type="PANTHER" id="PTHR30390">
    <property type="entry name" value="SEDOHEPTULOSE 7-PHOSPHATE ISOMERASE / DNAA INITIATOR-ASSOCIATING FACTOR FOR REPLICATION INITIATION"/>
    <property type="match status" value="1"/>
</dbReference>
<dbReference type="Pfam" id="PF13580">
    <property type="entry name" value="SIS_2"/>
    <property type="match status" value="1"/>
</dbReference>
<dbReference type="SUPFAM" id="SSF53697">
    <property type="entry name" value="SIS domain"/>
    <property type="match status" value="1"/>
</dbReference>
<dbReference type="PROSITE" id="PS51464">
    <property type="entry name" value="SIS"/>
    <property type="match status" value="1"/>
</dbReference>
<proteinExistence type="inferred from homology"/>
<protein>
    <recommendedName>
        <fullName evidence="1">UPF0309 protein Oant_1457</fullName>
    </recommendedName>
</protein>
<comment type="similarity">
    <text evidence="1">Belongs to the UPF0309 family.</text>
</comment>
<organism>
    <name type="scientific">Brucella anthropi (strain ATCC 49188 / DSM 6882 / CCUG 24695 / JCM 21032 / LMG 3331 / NBRC 15819 / NCTC 12168 / Alc 37)</name>
    <name type="common">Ochrobactrum anthropi</name>
    <dbReference type="NCBI Taxonomy" id="439375"/>
    <lineage>
        <taxon>Bacteria</taxon>
        <taxon>Pseudomonadati</taxon>
        <taxon>Pseudomonadota</taxon>
        <taxon>Alphaproteobacteria</taxon>
        <taxon>Hyphomicrobiales</taxon>
        <taxon>Brucellaceae</taxon>
        <taxon>Brucella/Ochrobactrum group</taxon>
        <taxon>Brucella</taxon>
    </lineage>
</organism>
<evidence type="ECO:0000255" key="1">
    <source>
        <dbReference type="HAMAP-Rule" id="MF_01240"/>
    </source>
</evidence>
<name>Y1457_BRUA4</name>
<accession>A6WYX0</accession>
<gene>
    <name type="ordered locus">Oant_1457</name>
</gene>
<reference key="1">
    <citation type="journal article" date="2011" name="J. Bacteriol.">
        <title>Genome of Ochrobactrum anthropi ATCC 49188 T, a versatile opportunistic pathogen and symbiont of several eukaryotic hosts.</title>
        <authorList>
            <person name="Chain P.S."/>
            <person name="Lang D.M."/>
            <person name="Comerci D.J."/>
            <person name="Malfatti S.A."/>
            <person name="Vergez L.M."/>
            <person name="Shin M."/>
            <person name="Ugalde R.A."/>
            <person name="Garcia E."/>
            <person name="Tolmasky M.E."/>
        </authorList>
    </citation>
    <scope>NUCLEOTIDE SEQUENCE [LARGE SCALE GENOMIC DNA]</scope>
    <source>
        <strain>ATCC 49188 / DSM 6882 / CCUG 24695 / JCM 21032 / LMG 3331 / NBRC 15819 / NCTC 12168 / Alc 37</strain>
    </source>
</reference>
<keyword id="KW-1185">Reference proteome</keyword>